<name>RL16_PARMW</name>
<feature type="chain" id="PRO_0000062231" description="Large ribosomal subunit protein uL16">
    <location>
        <begin position="1"/>
        <end position="158"/>
    </location>
</feature>
<comment type="function">
    <text evidence="1">Binds 23S rRNA and is also seen to make contacts with the A and possibly P site tRNAs.</text>
</comment>
<comment type="subunit">
    <text evidence="1">Part of the 50S ribosomal subunit.</text>
</comment>
<comment type="similarity">
    <text evidence="1">Belongs to the universal ribosomal protein uL16 family.</text>
</comment>
<evidence type="ECO:0000255" key="1">
    <source>
        <dbReference type="HAMAP-Rule" id="MF_01342"/>
    </source>
</evidence>
<evidence type="ECO:0000305" key="2"/>
<reference key="1">
    <citation type="journal article" date="2003" name="Nature">
        <title>The genome of a motile marine Synechococcus.</title>
        <authorList>
            <person name="Palenik B."/>
            <person name="Brahamsha B."/>
            <person name="Larimer F.W."/>
            <person name="Land M.L."/>
            <person name="Hauser L."/>
            <person name="Chain P."/>
            <person name="Lamerdin J.E."/>
            <person name="Regala W."/>
            <person name="Allen E.E."/>
            <person name="McCarren J."/>
            <person name="Paulsen I.T."/>
            <person name="Dufresne A."/>
            <person name="Partensky F."/>
            <person name="Webb E.A."/>
            <person name="Waterbury J."/>
        </authorList>
    </citation>
    <scope>NUCLEOTIDE SEQUENCE [LARGE SCALE GENOMIC DNA]</scope>
    <source>
        <strain>WH8102</strain>
    </source>
</reference>
<sequence>MLSPKRVKFRKMQRGRMRGVATRGNTIAFGEFALQAQECGWITSRQIEASRRAMTRYVKRGGKIWIRIFPDKSITMRAAETRMGSGKGNPEFWVAVIKPGRILFEMGGAEITPEIAKEAMRLAQYKLPVKTKFIALDEQQKQSAAEAPAAAEAVNVES</sequence>
<dbReference type="EMBL" id="BX569694">
    <property type="protein sequence ID" value="CAE08589.1"/>
    <property type="molecule type" value="Genomic_DNA"/>
</dbReference>
<dbReference type="RefSeq" id="WP_011128932.1">
    <property type="nucleotide sequence ID" value="NC_005070.1"/>
</dbReference>
<dbReference type="SMR" id="Q7U4J3"/>
<dbReference type="STRING" id="84588.SYNW2074"/>
<dbReference type="KEGG" id="syw:SYNW2074"/>
<dbReference type="eggNOG" id="COG0197">
    <property type="taxonomic scope" value="Bacteria"/>
</dbReference>
<dbReference type="HOGENOM" id="CLU_078858_2_1_3"/>
<dbReference type="Proteomes" id="UP000001422">
    <property type="component" value="Chromosome"/>
</dbReference>
<dbReference type="GO" id="GO:1990904">
    <property type="term" value="C:ribonucleoprotein complex"/>
    <property type="evidence" value="ECO:0007669"/>
    <property type="project" value="UniProtKB-KW"/>
</dbReference>
<dbReference type="GO" id="GO:0005840">
    <property type="term" value="C:ribosome"/>
    <property type="evidence" value="ECO:0007669"/>
    <property type="project" value="UniProtKB-KW"/>
</dbReference>
<dbReference type="GO" id="GO:0019843">
    <property type="term" value="F:rRNA binding"/>
    <property type="evidence" value="ECO:0007669"/>
    <property type="project" value="UniProtKB-UniRule"/>
</dbReference>
<dbReference type="GO" id="GO:0003735">
    <property type="term" value="F:structural constituent of ribosome"/>
    <property type="evidence" value="ECO:0007669"/>
    <property type="project" value="InterPro"/>
</dbReference>
<dbReference type="GO" id="GO:0000049">
    <property type="term" value="F:tRNA binding"/>
    <property type="evidence" value="ECO:0007669"/>
    <property type="project" value="UniProtKB-KW"/>
</dbReference>
<dbReference type="GO" id="GO:0006412">
    <property type="term" value="P:translation"/>
    <property type="evidence" value="ECO:0007669"/>
    <property type="project" value="UniProtKB-UniRule"/>
</dbReference>
<dbReference type="CDD" id="cd01433">
    <property type="entry name" value="Ribosomal_L16_L10e"/>
    <property type="match status" value="1"/>
</dbReference>
<dbReference type="FunFam" id="3.90.1170.10:FF:000001">
    <property type="entry name" value="50S ribosomal protein L16"/>
    <property type="match status" value="1"/>
</dbReference>
<dbReference type="Gene3D" id="3.90.1170.10">
    <property type="entry name" value="Ribosomal protein L10e/L16"/>
    <property type="match status" value="1"/>
</dbReference>
<dbReference type="HAMAP" id="MF_01342">
    <property type="entry name" value="Ribosomal_uL16"/>
    <property type="match status" value="1"/>
</dbReference>
<dbReference type="InterPro" id="IPR047873">
    <property type="entry name" value="Ribosomal_uL16"/>
</dbReference>
<dbReference type="InterPro" id="IPR000114">
    <property type="entry name" value="Ribosomal_uL16_bact-type"/>
</dbReference>
<dbReference type="InterPro" id="IPR020798">
    <property type="entry name" value="Ribosomal_uL16_CS"/>
</dbReference>
<dbReference type="InterPro" id="IPR016180">
    <property type="entry name" value="Ribosomal_uL16_dom"/>
</dbReference>
<dbReference type="InterPro" id="IPR036920">
    <property type="entry name" value="Ribosomal_uL16_sf"/>
</dbReference>
<dbReference type="NCBIfam" id="TIGR01164">
    <property type="entry name" value="rplP_bact"/>
    <property type="match status" value="1"/>
</dbReference>
<dbReference type="PANTHER" id="PTHR12220">
    <property type="entry name" value="50S/60S RIBOSOMAL PROTEIN L16"/>
    <property type="match status" value="1"/>
</dbReference>
<dbReference type="PANTHER" id="PTHR12220:SF13">
    <property type="entry name" value="LARGE RIBOSOMAL SUBUNIT PROTEIN UL16M"/>
    <property type="match status" value="1"/>
</dbReference>
<dbReference type="Pfam" id="PF00252">
    <property type="entry name" value="Ribosomal_L16"/>
    <property type="match status" value="1"/>
</dbReference>
<dbReference type="PRINTS" id="PR00060">
    <property type="entry name" value="RIBOSOMALL16"/>
</dbReference>
<dbReference type="SUPFAM" id="SSF54686">
    <property type="entry name" value="Ribosomal protein L16p/L10e"/>
    <property type="match status" value="1"/>
</dbReference>
<dbReference type="PROSITE" id="PS00586">
    <property type="entry name" value="RIBOSOMAL_L16_1"/>
    <property type="match status" value="1"/>
</dbReference>
<dbReference type="PROSITE" id="PS00701">
    <property type="entry name" value="RIBOSOMAL_L16_2"/>
    <property type="match status" value="1"/>
</dbReference>
<keyword id="KW-0687">Ribonucleoprotein</keyword>
<keyword id="KW-0689">Ribosomal protein</keyword>
<keyword id="KW-0694">RNA-binding</keyword>
<keyword id="KW-0699">rRNA-binding</keyword>
<keyword id="KW-0820">tRNA-binding</keyword>
<protein>
    <recommendedName>
        <fullName evidence="1">Large ribosomal subunit protein uL16</fullName>
    </recommendedName>
    <alternativeName>
        <fullName evidence="2">50S ribosomal protein L16</fullName>
    </alternativeName>
</protein>
<gene>
    <name evidence="1" type="primary">rplP</name>
    <name evidence="1" type="synonym">rpl16</name>
    <name type="ordered locus">SYNW2074</name>
</gene>
<proteinExistence type="inferred from homology"/>
<accession>Q7U4J3</accession>
<organism>
    <name type="scientific">Parasynechococcus marenigrum (strain WH8102)</name>
    <dbReference type="NCBI Taxonomy" id="84588"/>
    <lineage>
        <taxon>Bacteria</taxon>
        <taxon>Bacillati</taxon>
        <taxon>Cyanobacteriota</taxon>
        <taxon>Cyanophyceae</taxon>
        <taxon>Synechococcales</taxon>
        <taxon>Prochlorococcaceae</taxon>
        <taxon>Parasynechococcus</taxon>
        <taxon>Parasynechococcus marenigrum</taxon>
    </lineage>
</organism>